<evidence type="ECO:0000255" key="1">
    <source>
        <dbReference type="HAMAP-Rule" id="MF_01454"/>
    </source>
</evidence>
<evidence type="ECO:0000255" key="2">
    <source>
        <dbReference type="PROSITE-ProRule" id="PRU01231"/>
    </source>
</evidence>
<comment type="function">
    <text evidence="1">An essential GTPase which binds GTP, GDP and possibly (p)ppGpp with moderate affinity, with high nucleotide exchange rates and a fairly low GTP hydrolysis rate. Plays a role in control of the cell cycle, stress response, ribosome biogenesis and in those bacteria that undergo differentiation, in morphogenesis control.</text>
</comment>
<comment type="cofactor">
    <cofactor evidence="1">
        <name>Mg(2+)</name>
        <dbReference type="ChEBI" id="CHEBI:18420"/>
    </cofactor>
</comment>
<comment type="subunit">
    <text evidence="1">Monomer.</text>
</comment>
<comment type="subcellular location">
    <subcellularLocation>
        <location evidence="1">Cytoplasm</location>
    </subcellularLocation>
</comment>
<comment type="similarity">
    <text evidence="1">Belongs to the TRAFAC class OBG-HflX-like GTPase superfamily. OBG GTPase family.</text>
</comment>
<organism>
    <name type="scientific">Chlamydia trachomatis serovar A (strain ATCC VR-571B / DSM 19440 / HAR-13)</name>
    <dbReference type="NCBI Taxonomy" id="315277"/>
    <lineage>
        <taxon>Bacteria</taxon>
        <taxon>Pseudomonadati</taxon>
        <taxon>Chlamydiota</taxon>
        <taxon>Chlamydiia</taxon>
        <taxon>Chlamydiales</taxon>
        <taxon>Chlamydiaceae</taxon>
        <taxon>Chlamydia/Chlamydophila group</taxon>
        <taxon>Chlamydia</taxon>
    </lineage>
</organism>
<protein>
    <recommendedName>
        <fullName evidence="1">GTPase Obg</fullName>
        <ecNumber evidence="1">3.6.5.-</ecNumber>
    </recommendedName>
    <alternativeName>
        <fullName evidence="1">GTP-binding protein Obg</fullName>
    </alternativeName>
</protein>
<proteinExistence type="inferred from homology"/>
<dbReference type="EC" id="3.6.5.-" evidence="1"/>
<dbReference type="EMBL" id="CP000051">
    <property type="protein sequence ID" value="AAX50687.1"/>
    <property type="molecule type" value="Genomic_DNA"/>
</dbReference>
<dbReference type="SMR" id="Q3KLT5"/>
<dbReference type="KEGG" id="cta:CTA_0454"/>
<dbReference type="HOGENOM" id="CLU_011747_2_3_0"/>
<dbReference type="Proteomes" id="UP000002532">
    <property type="component" value="Chromosome"/>
</dbReference>
<dbReference type="GO" id="GO:0005737">
    <property type="term" value="C:cytoplasm"/>
    <property type="evidence" value="ECO:0007669"/>
    <property type="project" value="UniProtKB-SubCell"/>
</dbReference>
<dbReference type="GO" id="GO:0005525">
    <property type="term" value="F:GTP binding"/>
    <property type="evidence" value="ECO:0007669"/>
    <property type="project" value="UniProtKB-UniRule"/>
</dbReference>
<dbReference type="GO" id="GO:0003924">
    <property type="term" value="F:GTPase activity"/>
    <property type="evidence" value="ECO:0007669"/>
    <property type="project" value="UniProtKB-UniRule"/>
</dbReference>
<dbReference type="GO" id="GO:0000287">
    <property type="term" value="F:magnesium ion binding"/>
    <property type="evidence" value="ECO:0007669"/>
    <property type="project" value="InterPro"/>
</dbReference>
<dbReference type="GO" id="GO:0042254">
    <property type="term" value="P:ribosome biogenesis"/>
    <property type="evidence" value="ECO:0007669"/>
    <property type="project" value="UniProtKB-UniRule"/>
</dbReference>
<dbReference type="CDD" id="cd01898">
    <property type="entry name" value="Obg"/>
    <property type="match status" value="1"/>
</dbReference>
<dbReference type="FunFam" id="2.70.210.12:FF:000001">
    <property type="entry name" value="GTPase Obg"/>
    <property type="match status" value="1"/>
</dbReference>
<dbReference type="Gene3D" id="2.70.210.12">
    <property type="entry name" value="GTP1/OBG domain"/>
    <property type="match status" value="1"/>
</dbReference>
<dbReference type="Gene3D" id="3.40.50.300">
    <property type="entry name" value="P-loop containing nucleotide triphosphate hydrolases"/>
    <property type="match status" value="1"/>
</dbReference>
<dbReference type="HAMAP" id="MF_01454">
    <property type="entry name" value="GTPase_Obg"/>
    <property type="match status" value="1"/>
</dbReference>
<dbReference type="InterPro" id="IPR031167">
    <property type="entry name" value="G_OBG"/>
</dbReference>
<dbReference type="InterPro" id="IPR006073">
    <property type="entry name" value="GTP-bd"/>
</dbReference>
<dbReference type="InterPro" id="IPR014100">
    <property type="entry name" value="GTP-bd_Obg/CgtA"/>
</dbReference>
<dbReference type="InterPro" id="IPR006169">
    <property type="entry name" value="GTP1_OBG_dom"/>
</dbReference>
<dbReference type="InterPro" id="IPR036726">
    <property type="entry name" value="GTP1_OBG_dom_sf"/>
</dbReference>
<dbReference type="InterPro" id="IPR045086">
    <property type="entry name" value="OBG_GTPase"/>
</dbReference>
<dbReference type="InterPro" id="IPR027417">
    <property type="entry name" value="P-loop_NTPase"/>
</dbReference>
<dbReference type="InterPro" id="IPR005225">
    <property type="entry name" value="Small_GTP-bd"/>
</dbReference>
<dbReference type="NCBIfam" id="TIGR02729">
    <property type="entry name" value="Obg_CgtA"/>
    <property type="match status" value="1"/>
</dbReference>
<dbReference type="NCBIfam" id="NF008955">
    <property type="entry name" value="PRK12297.1"/>
    <property type="match status" value="1"/>
</dbReference>
<dbReference type="NCBIfam" id="NF008956">
    <property type="entry name" value="PRK12299.1"/>
    <property type="match status" value="1"/>
</dbReference>
<dbReference type="NCBIfam" id="TIGR00231">
    <property type="entry name" value="small_GTP"/>
    <property type="match status" value="1"/>
</dbReference>
<dbReference type="PANTHER" id="PTHR11702">
    <property type="entry name" value="DEVELOPMENTALLY REGULATED GTP-BINDING PROTEIN-RELATED"/>
    <property type="match status" value="1"/>
</dbReference>
<dbReference type="PANTHER" id="PTHR11702:SF31">
    <property type="entry name" value="MITOCHONDRIAL RIBOSOME-ASSOCIATED GTPASE 2"/>
    <property type="match status" value="1"/>
</dbReference>
<dbReference type="Pfam" id="PF01018">
    <property type="entry name" value="GTP1_OBG"/>
    <property type="match status" value="1"/>
</dbReference>
<dbReference type="Pfam" id="PF01926">
    <property type="entry name" value="MMR_HSR1"/>
    <property type="match status" value="1"/>
</dbReference>
<dbReference type="PIRSF" id="PIRSF002401">
    <property type="entry name" value="GTP_bd_Obg/CgtA"/>
    <property type="match status" value="1"/>
</dbReference>
<dbReference type="PRINTS" id="PR00326">
    <property type="entry name" value="GTP1OBG"/>
</dbReference>
<dbReference type="SUPFAM" id="SSF82051">
    <property type="entry name" value="Obg GTP-binding protein N-terminal domain"/>
    <property type="match status" value="1"/>
</dbReference>
<dbReference type="SUPFAM" id="SSF52540">
    <property type="entry name" value="P-loop containing nucleoside triphosphate hydrolases"/>
    <property type="match status" value="1"/>
</dbReference>
<dbReference type="PROSITE" id="PS51710">
    <property type="entry name" value="G_OBG"/>
    <property type="match status" value="1"/>
</dbReference>
<dbReference type="PROSITE" id="PS51883">
    <property type="entry name" value="OBG"/>
    <property type="match status" value="1"/>
</dbReference>
<accession>Q3KLT5</accession>
<sequence length="335" mass="36768">MFVDQITLELRAGKGGNGVVAWRKEKYLPKGGPYGGNGGNGGSILIEAVTNMYSFEEYRNLSFLKADDGQAGASNNRTGRNGKDLVLKVPEGTLLRDAATGELIHDFTKDGERIVVCQGGRGGKGNVFFKTSTNRAPTKATPGKPGEIRLVELELKLIADIGLVGFPNAGKSTLFNTLARTEVKVGAYPFTTLHPSLGLVHQEGMLYQKPWIMADIPGIIEGASQNRGLGLDFLRHIERTRLLLFVIDISGIERHSPEQDLKILMGELLAYKEELKDKDMVIALNKIDQLLPDEREERVALLKQQFPDQEFILLSGLTGEGVDALYDLFKSKLSE</sequence>
<feature type="chain" id="PRO_0000385816" description="GTPase Obg">
    <location>
        <begin position="1"/>
        <end position="335"/>
    </location>
</feature>
<feature type="domain" description="Obg" evidence="2">
    <location>
        <begin position="1"/>
        <end position="158"/>
    </location>
</feature>
<feature type="domain" description="OBG-type G" evidence="1">
    <location>
        <begin position="159"/>
        <end position="334"/>
    </location>
</feature>
<feature type="binding site" evidence="1">
    <location>
        <begin position="165"/>
        <end position="172"/>
    </location>
    <ligand>
        <name>GTP</name>
        <dbReference type="ChEBI" id="CHEBI:37565"/>
    </ligand>
</feature>
<feature type="binding site" evidence="1">
    <location>
        <position position="172"/>
    </location>
    <ligand>
        <name>Mg(2+)</name>
        <dbReference type="ChEBI" id="CHEBI:18420"/>
    </ligand>
</feature>
<feature type="binding site" evidence="1">
    <location>
        <begin position="190"/>
        <end position="194"/>
    </location>
    <ligand>
        <name>GTP</name>
        <dbReference type="ChEBI" id="CHEBI:37565"/>
    </ligand>
</feature>
<feature type="binding site" evidence="1">
    <location>
        <position position="192"/>
    </location>
    <ligand>
        <name>Mg(2+)</name>
        <dbReference type="ChEBI" id="CHEBI:18420"/>
    </ligand>
</feature>
<feature type="binding site" evidence="1">
    <location>
        <begin position="215"/>
        <end position="218"/>
    </location>
    <ligand>
        <name>GTP</name>
        <dbReference type="ChEBI" id="CHEBI:37565"/>
    </ligand>
</feature>
<feature type="binding site" evidence="1">
    <location>
        <begin position="285"/>
        <end position="288"/>
    </location>
    <ligand>
        <name>GTP</name>
        <dbReference type="ChEBI" id="CHEBI:37565"/>
    </ligand>
</feature>
<feature type="binding site" evidence="1">
    <location>
        <begin position="315"/>
        <end position="317"/>
    </location>
    <ligand>
        <name>GTP</name>
        <dbReference type="ChEBI" id="CHEBI:37565"/>
    </ligand>
</feature>
<gene>
    <name evidence="1" type="primary">obg</name>
    <name type="ordered locus">CTA_0454</name>
</gene>
<name>OBG_CHLTA</name>
<reference key="1">
    <citation type="journal article" date="2005" name="Infect. Immun.">
        <title>Comparative genomic analysis of Chlamydia trachomatis oculotropic and genitotropic strains.</title>
        <authorList>
            <person name="Carlson J.H."/>
            <person name="Porcella S.F."/>
            <person name="McClarty G."/>
            <person name="Caldwell H.D."/>
        </authorList>
    </citation>
    <scope>NUCLEOTIDE SEQUENCE [LARGE SCALE GENOMIC DNA]</scope>
    <source>
        <strain>ATCC VR-571B / DSM 19440 / HAR-13</strain>
    </source>
</reference>
<keyword id="KW-0963">Cytoplasm</keyword>
<keyword id="KW-0342">GTP-binding</keyword>
<keyword id="KW-0378">Hydrolase</keyword>
<keyword id="KW-0460">Magnesium</keyword>
<keyword id="KW-0479">Metal-binding</keyword>
<keyword id="KW-0547">Nucleotide-binding</keyword>